<keyword id="KW-0027">Amidation</keyword>
<keyword id="KW-0165">Cleavage on pair of basic residues</keyword>
<keyword id="KW-0903">Direct protein sequencing</keyword>
<keyword id="KW-0527">Neuropeptide</keyword>
<keyword id="KW-1185">Reference proteome</keyword>
<keyword id="KW-0964">Secreted</keyword>
<keyword id="KW-0732">Signal</keyword>
<organism>
    <name type="scientific">Drosophila melanogaster</name>
    <name type="common">Fruit fly</name>
    <dbReference type="NCBI Taxonomy" id="7227"/>
    <lineage>
        <taxon>Eukaryota</taxon>
        <taxon>Metazoa</taxon>
        <taxon>Ecdysozoa</taxon>
        <taxon>Arthropoda</taxon>
        <taxon>Hexapoda</taxon>
        <taxon>Insecta</taxon>
        <taxon>Pterygota</taxon>
        <taxon>Neoptera</taxon>
        <taxon>Endopterygota</taxon>
        <taxon>Diptera</taxon>
        <taxon>Brachycera</taxon>
        <taxon>Muscomorpha</taxon>
        <taxon>Ephydroidea</taxon>
        <taxon>Drosophilidae</taxon>
        <taxon>Drosophila</taxon>
        <taxon>Sophophora</taxon>
    </lineage>
</organism>
<dbReference type="EMBL" id="AE013599">
    <property type="protein sequence ID" value="AAF47313.2"/>
    <property type="molecule type" value="Genomic_DNA"/>
</dbReference>
<dbReference type="EMBL" id="AY060340">
    <property type="protein sequence ID" value="AAL25379.1"/>
    <property type="molecule type" value="mRNA"/>
</dbReference>
<dbReference type="RefSeq" id="NP_611993.1">
    <property type="nucleotide sequence ID" value="NM_138149.3"/>
</dbReference>
<dbReference type="SMR" id="Q9W0W6"/>
<dbReference type="BioGRID" id="63571">
    <property type="interactions" value="4"/>
</dbReference>
<dbReference type="DIP" id="DIP-17872N"/>
<dbReference type="FunCoup" id="Q9W0W6">
    <property type="interactions" value="58"/>
</dbReference>
<dbReference type="IntAct" id="Q9W0W6">
    <property type="interactions" value="1"/>
</dbReference>
<dbReference type="STRING" id="7227.FBpp0288531"/>
<dbReference type="PaxDb" id="7227-FBpp0288531"/>
<dbReference type="DNASU" id="38003"/>
<dbReference type="EnsemblMetazoa" id="FBtr0072443">
    <property type="protein sequence ID" value="FBpp0072348"/>
    <property type="gene ID" value="FBgn0035092"/>
</dbReference>
<dbReference type="GeneID" id="38003"/>
<dbReference type="KEGG" id="dme:Dmel_CG3441"/>
<dbReference type="AGR" id="FB:FBgn0035092"/>
<dbReference type="CTD" id="100529111"/>
<dbReference type="FlyBase" id="FBgn0035092">
    <property type="gene designation" value="Nplp1"/>
</dbReference>
<dbReference type="VEuPathDB" id="VectorBase:FBgn0035092"/>
<dbReference type="eggNOG" id="ENOG502S8KI">
    <property type="taxonomic scope" value="Eukaryota"/>
</dbReference>
<dbReference type="InParanoid" id="Q9W0W6"/>
<dbReference type="OrthoDB" id="6426745at2759"/>
<dbReference type="BioGRID-ORCS" id="38003">
    <property type="hits" value="0 hits in 1 CRISPR screen"/>
</dbReference>
<dbReference type="GenomeRNAi" id="38003"/>
<dbReference type="PRO" id="PR:Q9W0W6"/>
<dbReference type="Proteomes" id="UP000000803">
    <property type="component" value="Chromosome 2R"/>
</dbReference>
<dbReference type="Bgee" id="FBgn0035092">
    <property type="expression patterns" value="Expressed in medullary intrinsic neuron Mi9 (Drosophila) in insect head and 96 other cell types or tissues"/>
</dbReference>
<dbReference type="ExpressionAtlas" id="Q9W0W6">
    <property type="expression patterns" value="baseline and differential"/>
</dbReference>
<dbReference type="GO" id="GO:0005576">
    <property type="term" value="C:extracellular region"/>
    <property type="evidence" value="ECO:0000303"/>
    <property type="project" value="UniProtKB"/>
</dbReference>
<dbReference type="GO" id="GO:0005615">
    <property type="term" value="C:extracellular space"/>
    <property type="evidence" value="ECO:0000305"/>
    <property type="project" value="FlyBase"/>
</dbReference>
<dbReference type="GO" id="GO:0005184">
    <property type="term" value="F:neuropeptide hormone activity"/>
    <property type="evidence" value="ECO:0000314"/>
    <property type="project" value="FlyBase"/>
</dbReference>
<dbReference type="GO" id="GO:0048018">
    <property type="term" value="F:receptor ligand activity"/>
    <property type="evidence" value="ECO:0000353"/>
    <property type="project" value="FlyBase"/>
</dbReference>
<dbReference type="GO" id="GO:0007218">
    <property type="term" value="P:neuropeptide signaling pathway"/>
    <property type="evidence" value="ECO:0000303"/>
    <property type="project" value="UniProtKB"/>
</dbReference>
<dbReference type="GO" id="GO:0007168">
    <property type="term" value="P:receptor guanylyl cyclase signaling pathway"/>
    <property type="evidence" value="ECO:0000314"/>
    <property type="project" value="FlyBase"/>
</dbReference>
<feature type="signal peptide" evidence="1">
    <location>
        <begin position="1"/>
        <end position="28"/>
    </location>
</feature>
<feature type="propeptide" id="PRO_0000021832">
    <location>
        <begin position="29"/>
        <end position="99"/>
    </location>
</feature>
<feature type="peptide" id="PRO_0000021833" description="NAP peptide">
    <location>
        <begin position="102"/>
        <end position="115"/>
    </location>
</feature>
<feature type="peptide" id="PRO_0000021834" description="NPLP1-1" evidence="1">
    <location>
        <begin position="118"/>
        <end position="148"/>
    </location>
</feature>
<feature type="peptide" id="PRO_0000021835" description="MTYamide peptide">
    <location>
        <begin position="151"/>
        <end position="164"/>
    </location>
</feature>
<feature type="peptide" id="PRO_0000021836" description="IPNamide peptide">
    <location>
        <begin position="168"/>
        <end position="182"/>
    </location>
</feature>
<feature type="peptide" id="PRO_0000021837" description="NPLP1-2" evidence="1">
    <location>
        <begin position="186"/>
        <end position="203"/>
    </location>
</feature>
<feature type="peptide" id="PRO_0000021838" description="NPLP1-3" evidence="1">
    <location>
        <begin position="206"/>
        <end position="226"/>
    </location>
</feature>
<feature type="peptide" id="PRO_0000021839" description="NPLP1-4" evidence="1">
    <location>
        <begin position="229"/>
        <end position="243"/>
    </location>
</feature>
<feature type="peptide" id="PRO_0000021840" description="NPLP1-5" evidence="1">
    <location>
        <begin position="246"/>
        <end position="287"/>
    </location>
</feature>
<feature type="peptide" id="PRO_0000021841" description="NPLP1-6" evidence="1">
    <location>
        <begin position="290"/>
        <end position="309"/>
    </location>
</feature>
<feature type="region of interest" description="Disordered" evidence="2">
    <location>
        <begin position="126"/>
        <end position="147"/>
    </location>
</feature>
<feature type="compositionally biased region" description="Acidic residues" evidence="2">
    <location>
        <begin position="133"/>
        <end position="144"/>
    </location>
</feature>
<feature type="modified residue" description="Tyrosine amide" evidence="3">
    <location>
        <position position="164"/>
    </location>
</feature>
<feature type="modified residue" description="Asparagine amide" evidence="3">
    <location>
        <position position="182"/>
    </location>
</feature>
<reference key="1">
    <citation type="journal article" date="2000" name="Science">
        <title>The genome sequence of Drosophila melanogaster.</title>
        <authorList>
            <person name="Adams M.D."/>
            <person name="Celniker S.E."/>
            <person name="Holt R.A."/>
            <person name="Evans C.A."/>
            <person name="Gocayne J.D."/>
            <person name="Amanatides P.G."/>
            <person name="Scherer S.E."/>
            <person name="Li P.W."/>
            <person name="Hoskins R.A."/>
            <person name="Galle R.F."/>
            <person name="George R.A."/>
            <person name="Lewis S.E."/>
            <person name="Richards S."/>
            <person name="Ashburner M."/>
            <person name="Henderson S.N."/>
            <person name="Sutton G.G."/>
            <person name="Wortman J.R."/>
            <person name="Yandell M.D."/>
            <person name="Zhang Q."/>
            <person name="Chen L.X."/>
            <person name="Brandon R.C."/>
            <person name="Rogers Y.-H.C."/>
            <person name="Blazej R.G."/>
            <person name="Champe M."/>
            <person name="Pfeiffer B.D."/>
            <person name="Wan K.H."/>
            <person name="Doyle C."/>
            <person name="Baxter E.G."/>
            <person name="Helt G."/>
            <person name="Nelson C.R."/>
            <person name="Miklos G.L.G."/>
            <person name="Abril J.F."/>
            <person name="Agbayani A."/>
            <person name="An H.-J."/>
            <person name="Andrews-Pfannkoch C."/>
            <person name="Baldwin D."/>
            <person name="Ballew R.M."/>
            <person name="Basu A."/>
            <person name="Baxendale J."/>
            <person name="Bayraktaroglu L."/>
            <person name="Beasley E.M."/>
            <person name="Beeson K.Y."/>
            <person name="Benos P.V."/>
            <person name="Berman B.P."/>
            <person name="Bhandari D."/>
            <person name="Bolshakov S."/>
            <person name="Borkova D."/>
            <person name="Botchan M.R."/>
            <person name="Bouck J."/>
            <person name="Brokstein P."/>
            <person name="Brottier P."/>
            <person name="Burtis K.C."/>
            <person name="Busam D.A."/>
            <person name="Butler H."/>
            <person name="Cadieu E."/>
            <person name="Center A."/>
            <person name="Chandra I."/>
            <person name="Cherry J.M."/>
            <person name="Cawley S."/>
            <person name="Dahlke C."/>
            <person name="Davenport L.B."/>
            <person name="Davies P."/>
            <person name="de Pablos B."/>
            <person name="Delcher A."/>
            <person name="Deng Z."/>
            <person name="Mays A.D."/>
            <person name="Dew I."/>
            <person name="Dietz S.M."/>
            <person name="Dodson K."/>
            <person name="Doup L.E."/>
            <person name="Downes M."/>
            <person name="Dugan-Rocha S."/>
            <person name="Dunkov B.C."/>
            <person name="Dunn P."/>
            <person name="Durbin K.J."/>
            <person name="Evangelista C.C."/>
            <person name="Ferraz C."/>
            <person name="Ferriera S."/>
            <person name="Fleischmann W."/>
            <person name="Fosler C."/>
            <person name="Gabrielian A.E."/>
            <person name="Garg N.S."/>
            <person name="Gelbart W.M."/>
            <person name="Glasser K."/>
            <person name="Glodek A."/>
            <person name="Gong F."/>
            <person name="Gorrell J.H."/>
            <person name="Gu Z."/>
            <person name="Guan P."/>
            <person name="Harris M."/>
            <person name="Harris N.L."/>
            <person name="Harvey D.A."/>
            <person name="Heiman T.J."/>
            <person name="Hernandez J.R."/>
            <person name="Houck J."/>
            <person name="Hostin D."/>
            <person name="Houston K.A."/>
            <person name="Howland T.J."/>
            <person name="Wei M.-H."/>
            <person name="Ibegwam C."/>
            <person name="Jalali M."/>
            <person name="Kalush F."/>
            <person name="Karpen G.H."/>
            <person name="Ke Z."/>
            <person name="Kennison J.A."/>
            <person name="Ketchum K.A."/>
            <person name="Kimmel B.E."/>
            <person name="Kodira C.D."/>
            <person name="Kraft C.L."/>
            <person name="Kravitz S."/>
            <person name="Kulp D."/>
            <person name="Lai Z."/>
            <person name="Lasko P."/>
            <person name="Lei Y."/>
            <person name="Levitsky A.A."/>
            <person name="Li J.H."/>
            <person name="Li Z."/>
            <person name="Liang Y."/>
            <person name="Lin X."/>
            <person name="Liu X."/>
            <person name="Mattei B."/>
            <person name="McIntosh T.C."/>
            <person name="McLeod M.P."/>
            <person name="McPherson D."/>
            <person name="Merkulov G."/>
            <person name="Milshina N.V."/>
            <person name="Mobarry C."/>
            <person name="Morris J."/>
            <person name="Moshrefi A."/>
            <person name="Mount S.M."/>
            <person name="Moy M."/>
            <person name="Murphy B."/>
            <person name="Murphy L."/>
            <person name="Muzny D.M."/>
            <person name="Nelson D.L."/>
            <person name="Nelson D.R."/>
            <person name="Nelson K.A."/>
            <person name="Nixon K."/>
            <person name="Nusskern D.R."/>
            <person name="Pacleb J.M."/>
            <person name="Palazzolo M."/>
            <person name="Pittman G.S."/>
            <person name="Pan S."/>
            <person name="Pollard J."/>
            <person name="Puri V."/>
            <person name="Reese M.G."/>
            <person name="Reinert K."/>
            <person name="Remington K."/>
            <person name="Saunders R.D.C."/>
            <person name="Scheeler F."/>
            <person name="Shen H."/>
            <person name="Shue B.C."/>
            <person name="Siden-Kiamos I."/>
            <person name="Simpson M."/>
            <person name="Skupski M.P."/>
            <person name="Smith T.J."/>
            <person name="Spier E."/>
            <person name="Spradling A.C."/>
            <person name="Stapleton M."/>
            <person name="Strong R."/>
            <person name="Sun E."/>
            <person name="Svirskas R."/>
            <person name="Tector C."/>
            <person name="Turner R."/>
            <person name="Venter E."/>
            <person name="Wang A.H."/>
            <person name="Wang X."/>
            <person name="Wang Z.-Y."/>
            <person name="Wassarman D.A."/>
            <person name="Weinstock G.M."/>
            <person name="Weissenbach J."/>
            <person name="Williams S.M."/>
            <person name="Woodage T."/>
            <person name="Worley K.C."/>
            <person name="Wu D."/>
            <person name="Yang S."/>
            <person name="Yao Q.A."/>
            <person name="Ye J."/>
            <person name="Yeh R.-F."/>
            <person name="Zaveri J.S."/>
            <person name="Zhan M."/>
            <person name="Zhang G."/>
            <person name="Zhao Q."/>
            <person name="Zheng L."/>
            <person name="Zheng X.H."/>
            <person name="Zhong F.N."/>
            <person name="Zhong W."/>
            <person name="Zhou X."/>
            <person name="Zhu S.C."/>
            <person name="Zhu X."/>
            <person name="Smith H.O."/>
            <person name="Gibbs R.A."/>
            <person name="Myers E.W."/>
            <person name="Rubin G.M."/>
            <person name="Venter J.C."/>
        </authorList>
    </citation>
    <scope>NUCLEOTIDE SEQUENCE [LARGE SCALE GENOMIC DNA]</scope>
    <source>
        <strain>Berkeley</strain>
    </source>
</reference>
<reference key="2">
    <citation type="journal article" date="2002" name="Genome Biol.">
        <title>Annotation of the Drosophila melanogaster euchromatic genome: a systematic review.</title>
        <authorList>
            <person name="Misra S."/>
            <person name="Crosby M.A."/>
            <person name="Mungall C.J."/>
            <person name="Matthews B.B."/>
            <person name="Campbell K.S."/>
            <person name="Hradecky P."/>
            <person name="Huang Y."/>
            <person name="Kaminker J.S."/>
            <person name="Millburn G.H."/>
            <person name="Prochnik S.E."/>
            <person name="Smith C.D."/>
            <person name="Tupy J.L."/>
            <person name="Whitfield E.J."/>
            <person name="Bayraktaroglu L."/>
            <person name="Berman B.P."/>
            <person name="Bettencourt B.R."/>
            <person name="Celniker S.E."/>
            <person name="de Grey A.D.N.J."/>
            <person name="Drysdale R.A."/>
            <person name="Harris N.L."/>
            <person name="Richter J."/>
            <person name="Russo S."/>
            <person name="Schroeder A.J."/>
            <person name="Shu S.Q."/>
            <person name="Stapleton M."/>
            <person name="Yamada C."/>
            <person name="Ashburner M."/>
            <person name="Gelbart W.M."/>
            <person name="Rubin G.M."/>
            <person name="Lewis S.E."/>
        </authorList>
    </citation>
    <scope>GENOME REANNOTATION</scope>
    <source>
        <strain>Berkeley</strain>
    </source>
</reference>
<reference key="3">
    <citation type="journal article" date="2002" name="Genome Biol.">
        <title>A Drosophila full-length cDNA resource.</title>
        <authorList>
            <person name="Stapleton M."/>
            <person name="Carlson J.W."/>
            <person name="Brokstein P."/>
            <person name="Yu C."/>
            <person name="Champe M."/>
            <person name="George R.A."/>
            <person name="Guarin H."/>
            <person name="Kronmiller B."/>
            <person name="Pacleb J.M."/>
            <person name="Park S."/>
            <person name="Wan K.H."/>
            <person name="Rubin G.M."/>
            <person name="Celniker S.E."/>
        </authorList>
    </citation>
    <scope>NUCLEOTIDE SEQUENCE [LARGE SCALE MRNA]</scope>
    <source>
        <strain>Berkeley</strain>
        <tissue>Ovary</tissue>
    </source>
</reference>
<reference key="4">
    <citation type="journal article" date="2002" name="J. Biol. Chem.">
        <title>Peptidomics of the larval Drosophila melanogaster central nervous system.</title>
        <authorList>
            <person name="Baggerman G."/>
            <person name="Cerstiaens A."/>
            <person name="De Loof A."/>
            <person name="Schoofs L."/>
        </authorList>
    </citation>
    <scope>PROTEIN SEQUENCE OF 102-115; 151-164 AND 168-182</scope>
    <scope>AMIDATION AT TYR-164 AND ASN-182</scope>
    <source>
        <tissue>Larva</tissue>
    </source>
</reference>
<reference key="5">
    <citation type="journal article" date="2004" name="J. Neurochem.">
        <title>Expression of a novel neuropeptide, NVGTLARDFQLPIPNamide, in the larval and adult brain of Drosophila melanogaster.</title>
        <authorList>
            <person name="Verleyen P."/>
            <person name="Baggerman G."/>
            <person name="Wiehart U."/>
            <person name="Schoeters E."/>
            <person name="Van Lommel A."/>
            <person name="De Loof A."/>
            <person name="Schoofs L."/>
        </authorList>
    </citation>
    <scope>PROTEIN SEQUENCE OF 102-115; 151-164 AND 168-182</scope>
    <scope>TISSUE SPECIFICITY</scope>
    <source>
        <tissue>CNS</tissue>
    </source>
</reference>
<reference key="6">
    <citation type="journal article" date="2012" name="Peptides">
        <title>The receptor guanylate cyclase Gyc76C and a peptide ligand, NPLP1-VQQ, modulate the innate immune IMD pathway in response to salt stress.</title>
        <authorList>
            <person name="Overend G."/>
            <person name="Cabrero P."/>
            <person name="Guo A.X."/>
            <person name="Sebastian S."/>
            <person name="Cundall M."/>
            <person name="Armstrong H."/>
            <person name="Mertens I."/>
            <person name="Schoofs L."/>
            <person name="Dow J.A."/>
            <person name="Davies S.A."/>
        </authorList>
    </citation>
    <scope>FUNCTION (NPLP1-4 PEPTIDE)</scope>
</reference>
<reference key="7">
    <citation type="journal article" date="2015" name="PLoS Genet.">
        <title>The Gyc76C receptor guanylyl cyclase and the foraging cGMP-dependent kinase regulate extracellular matrix organization and BMP signaling in the developing wing of Drosophila melanogaster.</title>
        <authorList>
            <person name="Schleede J."/>
            <person name="Blair S.S."/>
        </authorList>
    </citation>
    <scope>FUNCTION (NPLP1-4 PEPTIDE)</scope>
    <scope>DISRUPTION PHENOTYPE (NPLP1-4 PEPTIDE)</scope>
</reference>
<evidence type="ECO:0000255" key="1"/>
<evidence type="ECO:0000256" key="2">
    <source>
        <dbReference type="SAM" id="MobiDB-lite"/>
    </source>
</evidence>
<evidence type="ECO:0000269" key="3">
    <source>
    </source>
</evidence>
<evidence type="ECO:0000269" key="4">
    <source>
    </source>
</evidence>
<evidence type="ECO:0000269" key="5">
    <source>
    </source>
</evidence>
<evidence type="ECO:0000269" key="6">
    <source>
    </source>
</evidence>
<name>NPLP1_DROME</name>
<protein>
    <recommendedName>
        <fullName>Neuropeptide-like 1</fullName>
    </recommendedName>
    <component>
        <recommendedName>
            <fullName>MTYamide peptide</fullName>
        </recommendedName>
    </component>
    <component>
        <recommendedName>
            <fullName>IPNamide peptide</fullName>
        </recommendedName>
    </component>
    <component>
        <recommendedName>
            <fullName>NAP peptide</fullName>
        </recommendedName>
    </component>
    <component>
        <recommendedName>
            <fullName>NPLP1-1</fullName>
        </recommendedName>
    </component>
    <component>
        <recommendedName>
            <fullName>NPLP1-2</fullName>
        </recommendedName>
    </component>
    <component>
        <recommendedName>
            <fullName>NPLP1-3</fullName>
        </recommendedName>
    </component>
    <component>
        <recommendedName>
            <fullName>NPLP1-4</fullName>
        </recommendedName>
    </component>
    <component>
        <recommendedName>
            <fullName>NPLP1-5</fullName>
        </recommendedName>
    </component>
    <component>
        <recommendedName>
            <fullName>NPLP1-6</fullName>
        </recommendedName>
    </component>
</protein>
<comment type="function">
    <molecule>NPLP1-4</molecule>
    <text evidence="5 6">Acts as a ligand for the receptor-type guanylate cyclase Gyc76C (PubMed:21893139). Stimulates Gyc76c-dependent cGMP production and modulates the IMD innate immune pathway in response to salt stress by inducing nuclear translocation of NF-kappa-B protein Rel which leads to increased expression of the antimicrobial peptide diptericin (PubMed:21893139). Does not appear to play a role in Gyc76C-mediated wing development (PubMed:26440503).</text>
</comment>
<comment type="subcellular location">
    <subcellularLocation>
        <location>Secreted</location>
    </subcellularLocation>
</comment>
<comment type="tissue specificity">
    <text evidence="4">MTYamide peptide: Expressed in the larval CNS (at protein level). NAP peptide: Expressed in the larval CNS (at protein level). IPNamide peptide: Expressed in the ventral ganglion of the third larval instar and adult brain (at protein level).</text>
</comment>
<comment type="disruption phenotype">
    <molecule>NPLP1-4</molecule>
    <text evidence="6">Occasional ectopic branching from the posterior crossvein.</text>
</comment>
<sequence length="309" mass="34198">MQAVLQSAHSSRRLMLLLSMLLNAAIQPRSIIVSATDDVANVSPCEMESLINQLMSPSPEYQLHASALRNQLKNLLRERQLAVGEEQPLGEYPDYLEEDKRSVAALAAQGLLNAPKRSLATLAKNGQLPTAEPGEDYGDADSGEPSEQKRYIGSLARAGGLMTYGKRNVGTLARDFQLPIPNGKRNIATMARLQSAPSTHRDPKRNVAAVARYNSQHGHIQRAGAEKRNLGALKSSPVHGVQQKREDEEMLLPAAAPDYADPMQSYWWYPSYAGYADLDWNDYRRAEKRFLGRVLPPTRATASTHRSRL</sequence>
<gene>
    <name type="primary">Nplp1</name>
    <name type="ORF">CG3441</name>
</gene>
<accession>Q9W0W6</accession>
<accession>Q95T41</accession>
<proteinExistence type="evidence at protein level"/>